<reference key="1">
    <citation type="submission" date="2008-12" db="EMBL/GenBank/DDBJ databases">
        <title>Complete sequence of chromosome of Shewanella baltica OS223.</title>
        <authorList>
            <consortium name="US DOE Joint Genome Institute"/>
            <person name="Lucas S."/>
            <person name="Copeland A."/>
            <person name="Lapidus A."/>
            <person name="Glavina del Rio T."/>
            <person name="Dalin E."/>
            <person name="Tice H."/>
            <person name="Bruce D."/>
            <person name="Goodwin L."/>
            <person name="Pitluck S."/>
            <person name="Chertkov O."/>
            <person name="Meincke L."/>
            <person name="Brettin T."/>
            <person name="Detter J.C."/>
            <person name="Han C."/>
            <person name="Kuske C.R."/>
            <person name="Larimer F."/>
            <person name="Land M."/>
            <person name="Hauser L."/>
            <person name="Kyrpides N."/>
            <person name="Ovchinnikova G."/>
            <person name="Brettar I."/>
            <person name="Rodrigues J."/>
            <person name="Konstantinidis K."/>
            <person name="Tiedje J."/>
        </authorList>
    </citation>
    <scope>NUCLEOTIDE SEQUENCE [LARGE SCALE GENOMIC DNA]</scope>
    <source>
        <strain>OS223</strain>
    </source>
</reference>
<accession>B8EB95</accession>
<feature type="chain" id="PRO_1000197578" description="UPF0114 protein Sbal223_3668">
    <location>
        <begin position="1"/>
        <end position="164"/>
    </location>
</feature>
<feature type="transmembrane region" description="Helical" evidence="1">
    <location>
        <begin position="15"/>
        <end position="35"/>
    </location>
</feature>
<feature type="transmembrane region" description="Helical" evidence="1">
    <location>
        <begin position="53"/>
        <end position="73"/>
    </location>
</feature>
<feature type="transmembrane region" description="Helical" evidence="1">
    <location>
        <begin position="108"/>
        <end position="128"/>
    </location>
</feature>
<feature type="transmembrane region" description="Helical" evidence="1">
    <location>
        <begin position="136"/>
        <end position="156"/>
    </location>
</feature>
<keyword id="KW-1003">Cell membrane</keyword>
<keyword id="KW-0472">Membrane</keyword>
<keyword id="KW-0812">Transmembrane</keyword>
<keyword id="KW-1133">Transmembrane helix</keyword>
<proteinExistence type="inferred from homology"/>
<dbReference type="EMBL" id="CP001252">
    <property type="protein sequence ID" value="ACK48146.1"/>
    <property type="molecule type" value="Genomic_DNA"/>
</dbReference>
<dbReference type="RefSeq" id="WP_006084177.1">
    <property type="nucleotide sequence ID" value="NC_011663.1"/>
</dbReference>
<dbReference type="KEGG" id="sbp:Sbal223_3668"/>
<dbReference type="HOGENOM" id="CLU_097887_1_0_6"/>
<dbReference type="Proteomes" id="UP000002507">
    <property type="component" value="Chromosome"/>
</dbReference>
<dbReference type="GO" id="GO:0005886">
    <property type="term" value="C:plasma membrane"/>
    <property type="evidence" value="ECO:0007669"/>
    <property type="project" value="UniProtKB-SubCell"/>
</dbReference>
<dbReference type="HAMAP" id="MF_00143">
    <property type="entry name" value="UPF0114"/>
    <property type="match status" value="1"/>
</dbReference>
<dbReference type="InterPro" id="IPR005134">
    <property type="entry name" value="UPF0114"/>
</dbReference>
<dbReference type="InterPro" id="IPR020761">
    <property type="entry name" value="UPF0114_bac"/>
</dbReference>
<dbReference type="NCBIfam" id="TIGR00645">
    <property type="entry name" value="HI0507"/>
    <property type="match status" value="1"/>
</dbReference>
<dbReference type="PANTHER" id="PTHR38596">
    <property type="entry name" value="UPF0114 PROTEIN YQHA"/>
    <property type="match status" value="1"/>
</dbReference>
<dbReference type="PANTHER" id="PTHR38596:SF1">
    <property type="entry name" value="UPF0114 PROTEIN YQHA"/>
    <property type="match status" value="1"/>
</dbReference>
<dbReference type="Pfam" id="PF03350">
    <property type="entry name" value="UPF0114"/>
    <property type="match status" value="1"/>
</dbReference>
<sequence>MEQIFEKLMYASRWIMAPIYLGLSLVLIGLGIKFFQEIFHILPIIFEITEVDLVLVTLSLIDITLVGGLIVMVMFSGYENFVSQLDVGEDSEKLSWLGKLDSGSLKNKVAASIVAISSIHLLKIFMDVKNIDNDKIMWYLLIHITFVLSAFAMGYLDKMTRAGK</sequence>
<protein>
    <recommendedName>
        <fullName evidence="1">UPF0114 protein Sbal223_3668</fullName>
    </recommendedName>
</protein>
<gene>
    <name type="ordered locus">Sbal223_3668</name>
</gene>
<organism>
    <name type="scientific">Shewanella baltica (strain OS223)</name>
    <dbReference type="NCBI Taxonomy" id="407976"/>
    <lineage>
        <taxon>Bacteria</taxon>
        <taxon>Pseudomonadati</taxon>
        <taxon>Pseudomonadota</taxon>
        <taxon>Gammaproteobacteria</taxon>
        <taxon>Alteromonadales</taxon>
        <taxon>Shewanellaceae</taxon>
        <taxon>Shewanella</taxon>
    </lineage>
</organism>
<evidence type="ECO:0000255" key="1">
    <source>
        <dbReference type="HAMAP-Rule" id="MF_00143"/>
    </source>
</evidence>
<comment type="subcellular location">
    <subcellularLocation>
        <location evidence="1">Cell membrane</location>
        <topology evidence="1">Multi-pass membrane protein</topology>
    </subcellularLocation>
</comment>
<comment type="similarity">
    <text evidence="1">Belongs to the UPF0114 family.</text>
</comment>
<name>Y3668_SHEB2</name>